<reference key="1">
    <citation type="journal article" date="2007" name="PLoS Biol.">
        <title>Evolution of symbiotic bacteria in the distal human intestine.</title>
        <authorList>
            <person name="Xu J."/>
            <person name="Mahowald M.A."/>
            <person name="Ley R.E."/>
            <person name="Lozupone C.A."/>
            <person name="Hamady M."/>
            <person name="Martens E.C."/>
            <person name="Henrissat B."/>
            <person name="Coutinho P.M."/>
            <person name="Minx P."/>
            <person name="Latreille P."/>
            <person name="Cordum H."/>
            <person name="Van Brunt A."/>
            <person name="Kim K."/>
            <person name="Fulton R.S."/>
            <person name="Fulton L.A."/>
            <person name="Clifton S.W."/>
            <person name="Wilson R.K."/>
            <person name="Knight R.D."/>
            <person name="Gordon J.I."/>
        </authorList>
    </citation>
    <scope>NUCLEOTIDE SEQUENCE [LARGE SCALE GENOMIC DNA]</scope>
    <source>
        <strain>ATCC 8482 / DSM 1447 / JCM 5826 / CCUG 4940 / NBRC 14291 / NCTC 11154</strain>
    </source>
</reference>
<evidence type="ECO:0000255" key="1">
    <source>
        <dbReference type="HAMAP-Rule" id="MF_01576"/>
    </source>
</evidence>
<comment type="function">
    <text evidence="1">Catalyzes the oxidation of 5,10-methylenetetrahydrofolate to 5,10-methenyltetrahydrofolate and then the hydrolysis of 5,10-methenyltetrahydrofolate to 10-formyltetrahydrofolate.</text>
</comment>
<comment type="catalytic activity">
    <reaction evidence="1">
        <text>(6R)-5,10-methylene-5,6,7,8-tetrahydrofolate + NADP(+) = (6R)-5,10-methenyltetrahydrofolate + NADPH</text>
        <dbReference type="Rhea" id="RHEA:22812"/>
        <dbReference type="ChEBI" id="CHEBI:15636"/>
        <dbReference type="ChEBI" id="CHEBI:57455"/>
        <dbReference type="ChEBI" id="CHEBI:57783"/>
        <dbReference type="ChEBI" id="CHEBI:58349"/>
        <dbReference type="EC" id="1.5.1.5"/>
    </reaction>
</comment>
<comment type="catalytic activity">
    <reaction evidence="1">
        <text>(6R)-5,10-methenyltetrahydrofolate + H2O = (6R)-10-formyltetrahydrofolate + H(+)</text>
        <dbReference type="Rhea" id="RHEA:23700"/>
        <dbReference type="ChEBI" id="CHEBI:15377"/>
        <dbReference type="ChEBI" id="CHEBI:15378"/>
        <dbReference type="ChEBI" id="CHEBI:57455"/>
        <dbReference type="ChEBI" id="CHEBI:195366"/>
        <dbReference type="EC" id="3.5.4.9"/>
    </reaction>
</comment>
<comment type="pathway">
    <text evidence="1">One-carbon metabolism; tetrahydrofolate interconversion.</text>
</comment>
<comment type="subunit">
    <text evidence="1">Homodimer.</text>
</comment>
<comment type="similarity">
    <text evidence="1">Belongs to the tetrahydrofolate dehydrogenase/cyclohydrolase family.</text>
</comment>
<organism>
    <name type="scientific">Phocaeicola vulgatus (strain ATCC 8482 / DSM 1447 / JCM 5826 / CCUG 4940 / NBRC 14291 / NCTC 11154)</name>
    <name type="common">Bacteroides vulgatus</name>
    <dbReference type="NCBI Taxonomy" id="435590"/>
    <lineage>
        <taxon>Bacteria</taxon>
        <taxon>Pseudomonadati</taxon>
        <taxon>Bacteroidota</taxon>
        <taxon>Bacteroidia</taxon>
        <taxon>Bacteroidales</taxon>
        <taxon>Bacteroidaceae</taxon>
        <taxon>Phocaeicola</taxon>
    </lineage>
</organism>
<keyword id="KW-0028">Amino-acid biosynthesis</keyword>
<keyword id="KW-0368">Histidine biosynthesis</keyword>
<keyword id="KW-0378">Hydrolase</keyword>
<keyword id="KW-0486">Methionine biosynthesis</keyword>
<keyword id="KW-0511">Multifunctional enzyme</keyword>
<keyword id="KW-0521">NADP</keyword>
<keyword id="KW-0554">One-carbon metabolism</keyword>
<keyword id="KW-0560">Oxidoreductase</keyword>
<keyword id="KW-0658">Purine biosynthesis</keyword>
<feature type="chain" id="PRO_0000305795" description="Bifunctional protein FolD">
    <location>
        <begin position="1"/>
        <end position="293"/>
    </location>
</feature>
<feature type="binding site" evidence="1">
    <location>
        <begin position="164"/>
        <end position="166"/>
    </location>
    <ligand>
        <name>NADP(+)</name>
        <dbReference type="ChEBI" id="CHEBI:58349"/>
    </ligand>
</feature>
<feature type="binding site" evidence="1">
    <location>
        <position position="193"/>
    </location>
    <ligand>
        <name>NADP(+)</name>
        <dbReference type="ChEBI" id="CHEBI:58349"/>
    </ligand>
</feature>
<feature type="binding site" evidence="1">
    <location>
        <position position="234"/>
    </location>
    <ligand>
        <name>NADP(+)</name>
        <dbReference type="ChEBI" id="CHEBI:58349"/>
    </ligand>
</feature>
<dbReference type="EC" id="1.5.1.5" evidence="1"/>
<dbReference type="EC" id="3.5.4.9" evidence="1"/>
<dbReference type="EMBL" id="CP000139">
    <property type="protein sequence ID" value="ABR39876.1"/>
    <property type="molecule type" value="Genomic_DNA"/>
</dbReference>
<dbReference type="RefSeq" id="WP_005848775.1">
    <property type="nucleotide sequence ID" value="NZ_JANSWM010000089.1"/>
</dbReference>
<dbReference type="SMR" id="A6L2G2"/>
<dbReference type="STRING" id="435590.BVU_2215"/>
<dbReference type="PaxDb" id="435590-BVU_2215"/>
<dbReference type="GeneID" id="5303179"/>
<dbReference type="KEGG" id="bvu:BVU_2215"/>
<dbReference type="eggNOG" id="COG0190">
    <property type="taxonomic scope" value="Bacteria"/>
</dbReference>
<dbReference type="HOGENOM" id="CLU_034045_2_1_10"/>
<dbReference type="BioCyc" id="BVUL435590:G1G59-2306-MONOMER"/>
<dbReference type="UniPathway" id="UPA00193"/>
<dbReference type="Proteomes" id="UP000002861">
    <property type="component" value="Chromosome"/>
</dbReference>
<dbReference type="GO" id="GO:0005829">
    <property type="term" value="C:cytosol"/>
    <property type="evidence" value="ECO:0007669"/>
    <property type="project" value="TreeGrafter"/>
</dbReference>
<dbReference type="GO" id="GO:0004477">
    <property type="term" value="F:methenyltetrahydrofolate cyclohydrolase activity"/>
    <property type="evidence" value="ECO:0007669"/>
    <property type="project" value="UniProtKB-UniRule"/>
</dbReference>
<dbReference type="GO" id="GO:0004488">
    <property type="term" value="F:methylenetetrahydrofolate dehydrogenase (NADP+) activity"/>
    <property type="evidence" value="ECO:0007669"/>
    <property type="project" value="UniProtKB-UniRule"/>
</dbReference>
<dbReference type="GO" id="GO:0000105">
    <property type="term" value="P:L-histidine biosynthetic process"/>
    <property type="evidence" value="ECO:0007669"/>
    <property type="project" value="UniProtKB-KW"/>
</dbReference>
<dbReference type="GO" id="GO:0009086">
    <property type="term" value="P:methionine biosynthetic process"/>
    <property type="evidence" value="ECO:0007669"/>
    <property type="project" value="UniProtKB-KW"/>
</dbReference>
<dbReference type="GO" id="GO:0006164">
    <property type="term" value="P:purine nucleotide biosynthetic process"/>
    <property type="evidence" value="ECO:0007669"/>
    <property type="project" value="UniProtKB-KW"/>
</dbReference>
<dbReference type="GO" id="GO:0035999">
    <property type="term" value="P:tetrahydrofolate interconversion"/>
    <property type="evidence" value="ECO:0007669"/>
    <property type="project" value="UniProtKB-UniRule"/>
</dbReference>
<dbReference type="CDD" id="cd01080">
    <property type="entry name" value="NAD_bind_m-THF_DH_Cyclohyd"/>
    <property type="match status" value="1"/>
</dbReference>
<dbReference type="FunFam" id="3.40.50.10860:FF:000001">
    <property type="entry name" value="Bifunctional protein FolD"/>
    <property type="match status" value="1"/>
</dbReference>
<dbReference type="FunFam" id="3.40.50.720:FF:000189">
    <property type="entry name" value="Bifunctional protein FolD"/>
    <property type="match status" value="1"/>
</dbReference>
<dbReference type="Gene3D" id="3.40.50.10860">
    <property type="entry name" value="Leucine Dehydrogenase, chain A, domain 1"/>
    <property type="match status" value="1"/>
</dbReference>
<dbReference type="Gene3D" id="3.40.50.720">
    <property type="entry name" value="NAD(P)-binding Rossmann-like Domain"/>
    <property type="match status" value="1"/>
</dbReference>
<dbReference type="HAMAP" id="MF_01576">
    <property type="entry name" value="THF_DHG_CYH"/>
    <property type="match status" value="1"/>
</dbReference>
<dbReference type="InterPro" id="IPR046346">
    <property type="entry name" value="Aminoacid_DH-like_N_sf"/>
</dbReference>
<dbReference type="InterPro" id="IPR036291">
    <property type="entry name" value="NAD(P)-bd_dom_sf"/>
</dbReference>
<dbReference type="InterPro" id="IPR000672">
    <property type="entry name" value="THF_DH/CycHdrlase"/>
</dbReference>
<dbReference type="InterPro" id="IPR020630">
    <property type="entry name" value="THF_DH/CycHdrlase_cat_dom"/>
</dbReference>
<dbReference type="InterPro" id="IPR020867">
    <property type="entry name" value="THF_DH/CycHdrlase_CS"/>
</dbReference>
<dbReference type="InterPro" id="IPR020631">
    <property type="entry name" value="THF_DH/CycHdrlase_NAD-bd_dom"/>
</dbReference>
<dbReference type="NCBIfam" id="NF010782">
    <property type="entry name" value="PRK14185.1"/>
    <property type="match status" value="1"/>
</dbReference>
<dbReference type="PANTHER" id="PTHR48099:SF5">
    <property type="entry name" value="C-1-TETRAHYDROFOLATE SYNTHASE, CYTOPLASMIC"/>
    <property type="match status" value="1"/>
</dbReference>
<dbReference type="PANTHER" id="PTHR48099">
    <property type="entry name" value="C-1-TETRAHYDROFOLATE SYNTHASE, CYTOPLASMIC-RELATED"/>
    <property type="match status" value="1"/>
</dbReference>
<dbReference type="Pfam" id="PF00763">
    <property type="entry name" value="THF_DHG_CYH"/>
    <property type="match status" value="1"/>
</dbReference>
<dbReference type="Pfam" id="PF02882">
    <property type="entry name" value="THF_DHG_CYH_C"/>
    <property type="match status" value="1"/>
</dbReference>
<dbReference type="PRINTS" id="PR00085">
    <property type="entry name" value="THFDHDRGNASE"/>
</dbReference>
<dbReference type="SUPFAM" id="SSF53223">
    <property type="entry name" value="Aminoacid dehydrogenase-like, N-terminal domain"/>
    <property type="match status" value="1"/>
</dbReference>
<dbReference type="SUPFAM" id="SSF51735">
    <property type="entry name" value="NAD(P)-binding Rossmann-fold domains"/>
    <property type="match status" value="1"/>
</dbReference>
<dbReference type="PROSITE" id="PS00766">
    <property type="entry name" value="THF_DHG_CYH_1"/>
    <property type="match status" value="1"/>
</dbReference>
<dbReference type="PROSITE" id="PS00767">
    <property type="entry name" value="THF_DHG_CYH_2"/>
    <property type="match status" value="1"/>
</dbReference>
<sequence length="293" mass="31534">MQLIDGKAISELVKQEIAAEVAGIVAKGGKRPHLAAILVGHDGGSETYVAAKVKACEVCGFKSSLIRYEADVTEEELLAKVRELNEDADVDGFIVQLPLPKHISEQKVIETIDYRKDVDGFHPINVGRMSIGLPCYVSATPNGILELLKRYHIETQGKKCVVLGRSNIVGKPMASLMMQKAYPGDATVTVCHSRSKDLVKECQEADIIIAALGQPNFVKAEMVKEGAVVIDVGTTRVPDATKKSGFKLTGDVKFDEVAPKCSYITPVPGGVGPMTIVSLMKNTLLAGKKAIYK</sequence>
<protein>
    <recommendedName>
        <fullName evidence="1">Bifunctional protein FolD</fullName>
    </recommendedName>
    <domain>
        <recommendedName>
            <fullName evidence="1">Methylenetetrahydrofolate dehydrogenase</fullName>
            <ecNumber evidence="1">1.5.1.5</ecNumber>
        </recommendedName>
    </domain>
    <domain>
        <recommendedName>
            <fullName evidence="1">Methenyltetrahydrofolate cyclohydrolase</fullName>
            <ecNumber evidence="1">3.5.4.9</ecNumber>
        </recommendedName>
    </domain>
</protein>
<accession>A6L2G2</accession>
<name>FOLD_PHOV8</name>
<gene>
    <name evidence="1" type="primary">folD</name>
    <name type="ordered locus">BVU_2215</name>
</gene>
<proteinExistence type="inferred from homology"/>